<reference evidence="12" key="1">
    <citation type="journal article" date="2000" name="Science">
        <title>The genome sequence of Drosophila melanogaster.</title>
        <authorList>
            <person name="Adams M.D."/>
            <person name="Celniker S.E."/>
            <person name="Holt R.A."/>
            <person name="Evans C.A."/>
            <person name="Gocayne J.D."/>
            <person name="Amanatides P.G."/>
            <person name="Scherer S.E."/>
            <person name="Li P.W."/>
            <person name="Hoskins R.A."/>
            <person name="Galle R.F."/>
            <person name="George R.A."/>
            <person name="Lewis S.E."/>
            <person name="Richards S."/>
            <person name="Ashburner M."/>
            <person name="Henderson S.N."/>
            <person name="Sutton G.G."/>
            <person name="Wortman J.R."/>
            <person name="Yandell M.D."/>
            <person name="Zhang Q."/>
            <person name="Chen L.X."/>
            <person name="Brandon R.C."/>
            <person name="Rogers Y.-H.C."/>
            <person name="Blazej R.G."/>
            <person name="Champe M."/>
            <person name="Pfeiffer B.D."/>
            <person name="Wan K.H."/>
            <person name="Doyle C."/>
            <person name="Baxter E.G."/>
            <person name="Helt G."/>
            <person name="Nelson C.R."/>
            <person name="Miklos G.L.G."/>
            <person name="Abril J.F."/>
            <person name="Agbayani A."/>
            <person name="An H.-J."/>
            <person name="Andrews-Pfannkoch C."/>
            <person name="Baldwin D."/>
            <person name="Ballew R.M."/>
            <person name="Basu A."/>
            <person name="Baxendale J."/>
            <person name="Bayraktaroglu L."/>
            <person name="Beasley E.M."/>
            <person name="Beeson K.Y."/>
            <person name="Benos P.V."/>
            <person name="Berman B.P."/>
            <person name="Bhandari D."/>
            <person name="Bolshakov S."/>
            <person name="Borkova D."/>
            <person name="Botchan M.R."/>
            <person name="Bouck J."/>
            <person name="Brokstein P."/>
            <person name="Brottier P."/>
            <person name="Burtis K.C."/>
            <person name="Busam D.A."/>
            <person name="Butler H."/>
            <person name="Cadieu E."/>
            <person name="Center A."/>
            <person name="Chandra I."/>
            <person name="Cherry J.M."/>
            <person name="Cawley S."/>
            <person name="Dahlke C."/>
            <person name="Davenport L.B."/>
            <person name="Davies P."/>
            <person name="de Pablos B."/>
            <person name="Delcher A."/>
            <person name="Deng Z."/>
            <person name="Mays A.D."/>
            <person name="Dew I."/>
            <person name="Dietz S.M."/>
            <person name="Dodson K."/>
            <person name="Doup L.E."/>
            <person name="Downes M."/>
            <person name="Dugan-Rocha S."/>
            <person name="Dunkov B.C."/>
            <person name="Dunn P."/>
            <person name="Durbin K.J."/>
            <person name="Evangelista C.C."/>
            <person name="Ferraz C."/>
            <person name="Ferriera S."/>
            <person name="Fleischmann W."/>
            <person name="Fosler C."/>
            <person name="Gabrielian A.E."/>
            <person name="Garg N.S."/>
            <person name="Gelbart W.M."/>
            <person name="Glasser K."/>
            <person name="Glodek A."/>
            <person name="Gong F."/>
            <person name="Gorrell J.H."/>
            <person name="Gu Z."/>
            <person name="Guan P."/>
            <person name="Harris M."/>
            <person name="Harris N.L."/>
            <person name="Harvey D.A."/>
            <person name="Heiman T.J."/>
            <person name="Hernandez J.R."/>
            <person name="Houck J."/>
            <person name="Hostin D."/>
            <person name="Houston K.A."/>
            <person name="Howland T.J."/>
            <person name="Wei M.-H."/>
            <person name="Ibegwam C."/>
            <person name="Jalali M."/>
            <person name="Kalush F."/>
            <person name="Karpen G.H."/>
            <person name="Ke Z."/>
            <person name="Kennison J.A."/>
            <person name="Ketchum K.A."/>
            <person name="Kimmel B.E."/>
            <person name="Kodira C.D."/>
            <person name="Kraft C.L."/>
            <person name="Kravitz S."/>
            <person name="Kulp D."/>
            <person name="Lai Z."/>
            <person name="Lasko P."/>
            <person name="Lei Y."/>
            <person name="Levitsky A.A."/>
            <person name="Li J.H."/>
            <person name="Li Z."/>
            <person name="Liang Y."/>
            <person name="Lin X."/>
            <person name="Liu X."/>
            <person name="Mattei B."/>
            <person name="McIntosh T.C."/>
            <person name="McLeod M.P."/>
            <person name="McPherson D."/>
            <person name="Merkulov G."/>
            <person name="Milshina N.V."/>
            <person name="Mobarry C."/>
            <person name="Morris J."/>
            <person name="Moshrefi A."/>
            <person name="Mount S.M."/>
            <person name="Moy M."/>
            <person name="Murphy B."/>
            <person name="Murphy L."/>
            <person name="Muzny D.M."/>
            <person name="Nelson D.L."/>
            <person name="Nelson D.R."/>
            <person name="Nelson K.A."/>
            <person name="Nixon K."/>
            <person name="Nusskern D.R."/>
            <person name="Pacleb J.M."/>
            <person name="Palazzolo M."/>
            <person name="Pittman G.S."/>
            <person name="Pan S."/>
            <person name="Pollard J."/>
            <person name="Puri V."/>
            <person name="Reese M.G."/>
            <person name="Reinert K."/>
            <person name="Remington K."/>
            <person name="Saunders R.D.C."/>
            <person name="Scheeler F."/>
            <person name="Shen H."/>
            <person name="Shue B.C."/>
            <person name="Siden-Kiamos I."/>
            <person name="Simpson M."/>
            <person name="Skupski M.P."/>
            <person name="Smith T.J."/>
            <person name="Spier E."/>
            <person name="Spradling A.C."/>
            <person name="Stapleton M."/>
            <person name="Strong R."/>
            <person name="Sun E."/>
            <person name="Svirskas R."/>
            <person name="Tector C."/>
            <person name="Turner R."/>
            <person name="Venter E."/>
            <person name="Wang A.H."/>
            <person name="Wang X."/>
            <person name="Wang Z.-Y."/>
            <person name="Wassarman D.A."/>
            <person name="Weinstock G.M."/>
            <person name="Weissenbach J."/>
            <person name="Williams S.M."/>
            <person name="Woodage T."/>
            <person name="Worley K.C."/>
            <person name="Wu D."/>
            <person name="Yang S."/>
            <person name="Yao Q.A."/>
            <person name="Ye J."/>
            <person name="Yeh R.-F."/>
            <person name="Zaveri J.S."/>
            <person name="Zhan M."/>
            <person name="Zhang G."/>
            <person name="Zhao Q."/>
            <person name="Zheng L."/>
            <person name="Zheng X.H."/>
            <person name="Zhong F.N."/>
            <person name="Zhong W."/>
            <person name="Zhou X."/>
            <person name="Zhu S.C."/>
            <person name="Zhu X."/>
            <person name="Smith H.O."/>
            <person name="Gibbs R.A."/>
            <person name="Myers E.W."/>
            <person name="Rubin G.M."/>
            <person name="Venter J.C."/>
        </authorList>
    </citation>
    <scope>NUCLEOTIDE SEQUENCE [LARGE SCALE GENOMIC DNA]</scope>
    <source>
        <strain evidence="12">Berkeley</strain>
    </source>
</reference>
<reference evidence="12" key="2">
    <citation type="journal article" date="2002" name="Genome Biol.">
        <title>Annotation of the Drosophila melanogaster euchromatic genome: a systematic review.</title>
        <authorList>
            <person name="Misra S."/>
            <person name="Crosby M.A."/>
            <person name="Mungall C.J."/>
            <person name="Matthews B.B."/>
            <person name="Campbell K.S."/>
            <person name="Hradecky P."/>
            <person name="Huang Y."/>
            <person name="Kaminker J.S."/>
            <person name="Millburn G.H."/>
            <person name="Prochnik S.E."/>
            <person name="Smith C.D."/>
            <person name="Tupy J.L."/>
            <person name="Whitfield E.J."/>
            <person name="Bayraktaroglu L."/>
            <person name="Berman B.P."/>
            <person name="Bettencourt B.R."/>
            <person name="Celniker S.E."/>
            <person name="de Grey A.D.N.J."/>
            <person name="Drysdale R.A."/>
            <person name="Harris N.L."/>
            <person name="Richter J."/>
            <person name="Russo S."/>
            <person name="Schroeder A.J."/>
            <person name="Shu S.Q."/>
            <person name="Stapleton M."/>
            <person name="Yamada C."/>
            <person name="Ashburner M."/>
            <person name="Gelbart W.M."/>
            <person name="Rubin G.M."/>
            <person name="Lewis S.E."/>
        </authorList>
    </citation>
    <scope>GENOME REANNOTATION</scope>
    <source>
        <strain evidence="12">Berkeley</strain>
    </source>
</reference>
<reference evidence="10" key="3">
    <citation type="submission" date="2007-02" db="EMBL/GenBank/DDBJ databases">
        <authorList>
            <person name="Stapleton M."/>
            <person name="Carlson J."/>
            <person name="Frise E."/>
            <person name="Kapadia B."/>
            <person name="Park S."/>
            <person name="Wan K."/>
            <person name="Yu C."/>
            <person name="Celniker S."/>
        </authorList>
    </citation>
    <scope>NUCLEOTIDE SEQUENCE [LARGE SCALE MRNA]</scope>
    <source>
        <strain evidence="10">Berkeley</strain>
        <tissue evidence="10">Embryo</tissue>
    </source>
</reference>
<reference evidence="9" key="4">
    <citation type="journal article" date="2008" name="Curr. Biol.">
        <title>The DHHC palmitoyltransferase approximated regulates Fat signaling and Dachs localization and activity.</title>
        <authorList>
            <person name="Matakatsu H."/>
            <person name="Blair S.S."/>
        </authorList>
    </citation>
    <scope>FUNCTION</scope>
    <scope>SUBCELLULAR LOCATION</scope>
    <scope>TISSUE SPECIFICITY</scope>
    <scope>DISRUPTION PHENOTYPE</scope>
</reference>
<reference evidence="9" key="5">
    <citation type="journal article" date="2008" name="Fly">
        <title>The Drosophila protein palmitoylome: characterizing palmitoyl-thioesterases and DHHC palmitoyl-transferases.</title>
        <authorList>
            <person name="Bannan B.A."/>
            <person name="Van Etten J."/>
            <person name="Kohler J.A."/>
            <person name="Tsoi Y."/>
            <person name="Hansen N.M."/>
            <person name="Sigmon S."/>
            <person name="Fowler E."/>
            <person name="Buff H."/>
            <person name="Williams T.S."/>
            <person name="Ault J.G."/>
            <person name="Glaser R.L."/>
            <person name="Korey C.A."/>
        </authorList>
    </citation>
    <scope>SUBCELLULAR LOCATION</scope>
    <scope>TISSUE SPECIFICITY</scope>
</reference>
<reference evidence="9" key="6">
    <citation type="journal article" date="2016" name="Elife">
        <title>The novel SH3 domain protein Dlish/CG10933 mediates fat signaling in Drosophila by binding and regulating Dachs.</title>
        <authorList>
            <person name="Zhang Y."/>
            <person name="Wang X."/>
            <person name="Matakatsu H."/>
            <person name="Fehon R."/>
            <person name="Blair S.S."/>
        </authorList>
    </citation>
    <scope>FUNCTION</scope>
    <scope>CATALYTIC ACTIVITY</scope>
    <scope>INTERACTION WITH DLISH AND FT</scope>
</reference>
<reference key="7">
    <citation type="journal article" date="2016" name="Elife">
        <authorList>
            <person name="Zhang Y."/>
            <person name="Wang X."/>
            <person name="Matakatsu H."/>
            <person name="Fehon R."/>
            <person name="Blair S.S."/>
        </authorList>
    </citation>
    <scope>ERRATUM OF PUBMED:27692068</scope>
</reference>
<sequence>MNLLCCCCCSNMAPNQRVTRKWELFAGRNKFYCDGLLMSAPHTGVFYLTCILITGTSALFFAFDCPFLADSINPAIPIVGAVLYFFTMSSLLRTTFTDPGVIPRASNDEAAYIEKQIEVPNSLNSPTYRPPPRTKEVLVKGQTVKLKYCFTCKIFRPPRASHCSLCDNCVDRFDHHCPWVGNCVGKRNYRFFYLFLVSLAFLAVFIFSCSVTHLVLLMKKEHEVFNVIKAAPFTVIVVFICFFSIWSVIGLAGFHTYLTTSDQTTNEDLKGSFSSKGGPRTQNPYSRGNICLNCCHILCGPMTPSLIDRRGIATDEFIQQMQHQSSPRHALSDVLSASHMVTTSQPMMGGLGGGGIGGAGGGISIGGAELKPRFYDESNPSSSTLEGNGGAINGHGNGHGNGFDHPPPSYDLVQNGNSNSLAQLVDNEIPLVQMDIPAYTHQTATQARQYRHRHHKQRQICNGGTVSYENQLANASSEDELDDPDVVVVGSPEVVAAVAAIASNKAREMRNRSGSYSNLFDADFEAALVNSSLADNHVRGEGASSSGKPSAGAALLAAAISGKTENMYSNVLPVDNDTDPADSTLHVYSNIIDERKQQEQANNVLSSTLLCDDLDLDDPVSASCHVKRKSLGDGAEQVKSAERLRMLHDNTMIDTALDLDSLDGSSMGNNSQSCLVKSGKPNATSVTTNVAIV</sequence>
<proteinExistence type="evidence at protein level"/>
<comment type="function">
    <text evidence="6 7">Palmitoylates Dlish which is required for the apical cell cortex localization, total cellular level and full activity of dachs.</text>
</comment>
<comment type="catalytic activity">
    <reaction evidence="3 7">
        <text>L-cysteinyl-[protein] + hexadecanoyl-CoA = S-hexadecanoyl-L-cysteinyl-[protein] + CoA</text>
        <dbReference type="Rhea" id="RHEA:36683"/>
        <dbReference type="Rhea" id="RHEA-COMP:10131"/>
        <dbReference type="Rhea" id="RHEA-COMP:11032"/>
        <dbReference type="ChEBI" id="CHEBI:29950"/>
        <dbReference type="ChEBI" id="CHEBI:57287"/>
        <dbReference type="ChEBI" id="CHEBI:57379"/>
        <dbReference type="ChEBI" id="CHEBI:74151"/>
        <dbReference type="EC" id="2.3.1.225"/>
    </reaction>
</comment>
<comment type="subunit">
    <text evidence="7">Interacts with Dlish (via N-terminus including SH3 domain 1); this leads to palmitoylation of Dlish by app. Interacts with ft; this is likely to interfere with the interaction between app and Dlish, reducing the ability of app to palmitoylate Dlish and tether it to the apical cell cortex.</text>
</comment>
<comment type="subcellular location">
    <subcellularLocation>
        <location evidence="5">Endoplasmic reticulum membrane</location>
        <topology evidence="1">Multi-pass membrane protein</topology>
    </subcellularLocation>
    <subcellularLocation>
        <location evidence="6">Apical cell membrane</location>
        <topology evidence="1">Multi-pass membrane protein</topology>
    </subcellularLocation>
</comment>
<comment type="alternative products">
    <event type="alternative splicing"/>
    <isoform>
        <id>A2VEY9-1</id>
        <name evidence="11">L</name>
        <name evidence="11">M</name>
        <name evidence="11">R</name>
        <name evidence="11">T</name>
        <sequence type="displayed"/>
    </isoform>
    <isoform>
        <id>A2VEY9-2</id>
        <name evidence="11">S</name>
        <sequence type="described" ref="VSP_058747"/>
    </isoform>
    <isoform>
        <id>A2VEY9-3</id>
        <name evidence="11">H</name>
        <name evidence="11">I</name>
        <sequence type="described" ref="VSP_058748 VSP_058751"/>
    </isoform>
    <isoform>
        <id>A2VEY9-4</id>
        <name evidence="11">O</name>
        <sequence type="described" ref="VSP_058749 VSP_058750"/>
    </isoform>
</comment>
<comment type="tissue specificity">
    <text evidence="5">Detected in embryo, imaginal disks and pupal wings (at protein level) (PubMed:18804377). Enriched in the somatic musculature and gut throughout embryonic development (PubMed:18719403).</text>
</comment>
<comment type="domain">
    <text evidence="3">The DHHC domain is required for palmitoyltransferase activity.</text>
</comment>
<comment type="disruption phenotype">
    <text evidence="6">Semi-lethal in homozygotes and heterozygotes with adult escapers showing abdominal planar cell polarity defects and also extensive wing planar cell polarity defects, both proximally and in a distal region between the third and fourth longitudinal veins. Greatly reduced accumulation of dachs at the apical cell cortex.</text>
</comment>
<comment type="similarity">
    <text evidence="9">Belongs to the DHHC palmitoyltransferase family. ERF2/ZDHHC9 subfamily.</text>
</comment>
<feature type="chain" id="PRO_0000438852" description="Palmitoyltransferase app">
    <location>
        <begin position="1"/>
        <end position="693"/>
    </location>
</feature>
<feature type="transmembrane region" description="Helical" evidence="1">
    <location>
        <begin position="43"/>
        <end position="63"/>
    </location>
</feature>
<feature type="transmembrane region" description="Helical" evidence="1">
    <location>
        <begin position="72"/>
        <end position="92"/>
    </location>
</feature>
<feature type="transmembrane region" description="Helical" evidence="1">
    <location>
        <begin position="191"/>
        <end position="211"/>
    </location>
</feature>
<feature type="transmembrane region" description="Helical" evidence="1">
    <location>
        <begin position="233"/>
        <end position="253"/>
    </location>
</feature>
<feature type="transmembrane region" description="Helical" evidence="1">
    <location>
        <begin position="347"/>
        <end position="367"/>
    </location>
</feature>
<feature type="domain" description="DHHC" evidence="2">
    <location>
        <begin position="147"/>
        <end position="197"/>
    </location>
</feature>
<feature type="region of interest" description="Disordered" evidence="4">
    <location>
        <begin position="377"/>
        <end position="406"/>
    </location>
</feature>
<feature type="compositionally biased region" description="Gly residues" evidence="4">
    <location>
        <begin position="387"/>
        <end position="401"/>
    </location>
</feature>
<feature type="active site" description="S-palmitoyl cysteine intermediate" evidence="2">
    <location>
        <position position="177"/>
    </location>
</feature>
<feature type="splice variant" id="VSP_058747" description="In isoform S." evidence="9">
    <location>
        <begin position="1"/>
        <end position="217"/>
    </location>
</feature>
<feature type="splice variant" id="VSP_058748" description="In isoform H." evidence="9">
    <original>SNPSSSTLEGNGGAINGHGNG</original>
    <variation>VSGQSSGHIESIQEHPFTTEI</variation>
    <location>
        <begin position="378"/>
        <end position="398"/>
    </location>
</feature>
<feature type="splice variant" id="VSP_058749" description="In isoform O." evidence="9">
    <original>SNPSS</original>
    <variation>VIPIV</variation>
    <location>
        <begin position="378"/>
        <end position="382"/>
    </location>
</feature>
<feature type="splice variant" id="VSP_058750" description="In isoform O." evidence="9">
    <location>
        <begin position="383"/>
        <end position="693"/>
    </location>
</feature>
<feature type="splice variant" id="VSP_058751" description="In isoform H." evidence="9">
    <location>
        <begin position="399"/>
        <end position="693"/>
    </location>
</feature>
<protein>
    <recommendedName>
        <fullName evidence="8">Palmitoyltransferase app</fullName>
        <ecNumber evidence="3 7">2.3.1.225</ecNumber>
    </recommendedName>
    <alternativeName>
        <fullName evidence="8">Protein approximated</fullName>
    </alternativeName>
</protein>
<organism evidence="10">
    <name type="scientific">Drosophila melanogaster</name>
    <name type="common">Fruit fly</name>
    <dbReference type="NCBI Taxonomy" id="7227"/>
    <lineage>
        <taxon>Eukaryota</taxon>
        <taxon>Metazoa</taxon>
        <taxon>Ecdysozoa</taxon>
        <taxon>Arthropoda</taxon>
        <taxon>Hexapoda</taxon>
        <taxon>Insecta</taxon>
        <taxon>Pterygota</taxon>
        <taxon>Neoptera</taxon>
        <taxon>Endopterygota</taxon>
        <taxon>Diptera</taxon>
        <taxon>Brachycera</taxon>
        <taxon>Muscomorpha</taxon>
        <taxon>Ephydroidea</taxon>
        <taxon>Drosophilidae</taxon>
        <taxon>Drosophila</taxon>
        <taxon>Sophophora</taxon>
    </lineage>
</organism>
<name>APP_DROME</name>
<keyword id="KW-0012">Acyltransferase</keyword>
<keyword id="KW-0025">Alternative splicing</keyword>
<keyword id="KW-1003">Cell membrane</keyword>
<keyword id="KW-0256">Endoplasmic reticulum</keyword>
<keyword id="KW-0449">Lipoprotein</keyword>
<keyword id="KW-0472">Membrane</keyword>
<keyword id="KW-0564">Palmitate</keyword>
<keyword id="KW-1185">Reference proteome</keyword>
<keyword id="KW-0808">Transferase</keyword>
<keyword id="KW-0812">Transmembrane</keyword>
<keyword id="KW-1133">Transmembrane helix</keyword>
<gene>
    <name evidence="8 11" type="primary">app</name>
    <name evidence="11" type="ORF">CG42318</name>
</gene>
<dbReference type="EC" id="2.3.1.225" evidence="3 7"/>
<dbReference type="EMBL" id="AE014296">
    <property type="protein sequence ID" value="ACL83291.1"/>
    <property type="molecule type" value="Genomic_DNA"/>
</dbReference>
<dbReference type="EMBL" id="AE014296">
    <property type="protein sequence ID" value="ACL83292.1"/>
    <property type="molecule type" value="Genomic_DNA"/>
</dbReference>
<dbReference type="EMBL" id="AE014296">
    <property type="protein sequence ID" value="ACL83293.2"/>
    <property type="molecule type" value="Genomic_DNA"/>
</dbReference>
<dbReference type="EMBL" id="AE014296">
    <property type="protein sequence ID" value="ACL83294.2"/>
    <property type="molecule type" value="Genomic_DNA"/>
</dbReference>
<dbReference type="EMBL" id="AE014296">
    <property type="protein sequence ID" value="AFH04402.2"/>
    <property type="molecule type" value="Genomic_DNA"/>
</dbReference>
<dbReference type="EMBL" id="AE014296">
    <property type="protein sequence ID" value="AFH04403.1"/>
    <property type="molecule type" value="Genomic_DNA"/>
</dbReference>
<dbReference type="EMBL" id="AE014296">
    <property type="protein sequence ID" value="AFH04404.2"/>
    <property type="molecule type" value="Genomic_DNA"/>
</dbReference>
<dbReference type="EMBL" id="AE014296">
    <property type="protein sequence ID" value="AHN58068.1"/>
    <property type="molecule type" value="Genomic_DNA"/>
</dbReference>
<dbReference type="EMBL" id="BT030308">
    <property type="protein sequence ID" value="ABN49447.1"/>
    <property type="molecule type" value="mRNA"/>
</dbReference>
<dbReference type="RefSeq" id="NP_001137936.1">
    <molecule id="A2VEY9-1"/>
    <property type="nucleotide sequence ID" value="NM_001144464.2"/>
</dbReference>
<dbReference type="RefSeq" id="NP_001137937.1">
    <molecule id="A2VEY9-1"/>
    <property type="nucleotide sequence ID" value="NM_001144465.2"/>
</dbReference>
<dbReference type="RefSeq" id="NP_001137938.2">
    <molecule id="A2VEY9-3"/>
    <property type="nucleotide sequence ID" value="NM_001144466.3"/>
</dbReference>
<dbReference type="RefSeq" id="NP_001137939.2">
    <molecule id="A2VEY9-3"/>
    <property type="nucleotide sequence ID" value="NM_001144467.3"/>
</dbReference>
<dbReference type="RefSeq" id="NP_001246731.2">
    <molecule id="A2VEY9-1"/>
    <property type="nucleotide sequence ID" value="NM_001259802.2"/>
</dbReference>
<dbReference type="RefSeq" id="NP_001246732.1">
    <molecule id="A2VEY9-4"/>
    <property type="nucleotide sequence ID" value="NM_001259803.2"/>
</dbReference>
<dbReference type="RefSeq" id="NP_001246733.2">
    <molecule id="A2VEY9-2"/>
    <property type="nucleotide sequence ID" value="NM_001259804.2"/>
</dbReference>
<dbReference type="RefSeq" id="NP_001287043.1">
    <molecule id="A2VEY9-1"/>
    <property type="nucleotide sequence ID" value="NM_001300114.1"/>
</dbReference>
<dbReference type="SMR" id="A2VEY9"/>
<dbReference type="FunCoup" id="A2VEY9">
    <property type="interactions" value="128"/>
</dbReference>
<dbReference type="IntAct" id="A2VEY9">
    <property type="interactions" value="3"/>
</dbReference>
<dbReference type="STRING" id="7227.FBpp0290276"/>
<dbReference type="PaxDb" id="7227-FBpp0290276"/>
<dbReference type="DNASU" id="39399"/>
<dbReference type="EnsemblMetazoa" id="FBtr0301052">
    <molecule id="A2VEY9-3"/>
    <property type="protein sequence ID" value="FBpp0290274"/>
    <property type="gene ID" value="FBgn0260941"/>
</dbReference>
<dbReference type="EnsemblMetazoa" id="FBtr0301053">
    <molecule id="A2VEY9-3"/>
    <property type="protein sequence ID" value="FBpp0290275"/>
    <property type="gene ID" value="FBgn0260941"/>
</dbReference>
<dbReference type="EnsemblMetazoa" id="FBtr0301056">
    <molecule id="A2VEY9-1"/>
    <property type="protein sequence ID" value="FBpp0290278"/>
    <property type="gene ID" value="FBgn0260941"/>
</dbReference>
<dbReference type="EnsemblMetazoa" id="FBtr0301057">
    <molecule id="A2VEY9-1"/>
    <property type="protein sequence ID" value="FBpp0290279"/>
    <property type="gene ID" value="FBgn0260941"/>
</dbReference>
<dbReference type="EnsemblMetazoa" id="FBtr0304661">
    <molecule id="A2VEY9-4"/>
    <property type="protein sequence ID" value="FBpp0293203"/>
    <property type="gene ID" value="FBgn0260941"/>
</dbReference>
<dbReference type="EnsemblMetazoa" id="FBtr0334102">
    <molecule id="A2VEY9-1"/>
    <property type="protein sequence ID" value="FBpp0306224"/>
    <property type="gene ID" value="FBgn0260941"/>
</dbReference>
<dbReference type="EnsemblMetazoa" id="FBtr0334103">
    <molecule id="A2VEY9-2"/>
    <property type="protein sequence ID" value="FBpp0306225"/>
    <property type="gene ID" value="FBgn0260941"/>
</dbReference>
<dbReference type="EnsemblMetazoa" id="FBtr0339925">
    <molecule id="A2VEY9-1"/>
    <property type="protein sequence ID" value="FBpp0308957"/>
    <property type="gene ID" value="FBgn0260941"/>
</dbReference>
<dbReference type="GeneID" id="39399"/>
<dbReference type="KEGG" id="dme:Dmel_CG42318"/>
<dbReference type="AGR" id="FB:FBgn0260941"/>
<dbReference type="CTD" id="351"/>
<dbReference type="FlyBase" id="FBgn0260941">
    <property type="gene designation" value="app"/>
</dbReference>
<dbReference type="VEuPathDB" id="VectorBase:FBgn0260941"/>
<dbReference type="eggNOG" id="KOG1311">
    <property type="taxonomic scope" value="Eukaryota"/>
</dbReference>
<dbReference type="GeneTree" id="ENSGT00940000156483"/>
<dbReference type="HOGENOM" id="CLU_018741_6_0_1"/>
<dbReference type="InParanoid" id="A2VEY9"/>
<dbReference type="OMA" id="MRPRYKH"/>
<dbReference type="OrthoDB" id="4096362at2759"/>
<dbReference type="Reactome" id="R-DME-9648002">
    <property type="pathway name" value="RAS processing"/>
</dbReference>
<dbReference type="BioGRID-ORCS" id="39399">
    <property type="hits" value="0 hits in 3 CRISPR screens"/>
</dbReference>
<dbReference type="GenomeRNAi" id="39399"/>
<dbReference type="PRO" id="PR:A2VEY9"/>
<dbReference type="Proteomes" id="UP000000803">
    <property type="component" value="Chromosome 3L"/>
</dbReference>
<dbReference type="Bgee" id="FBgn0260941">
    <property type="expression patterns" value="Expressed in lamina wide-field cell (Drosophila) in insect head and 273 other cell types or tissues"/>
</dbReference>
<dbReference type="ExpressionAtlas" id="A2VEY9">
    <property type="expression patterns" value="baseline and differential"/>
</dbReference>
<dbReference type="GO" id="GO:0045179">
    <property type="term" value="C:apical cortex"/>
    <property type="evidence" value="ECO:0000314"/>
    <property type="project" value="FlyBase"/>
</dbReference>
<dbReference type="GO" id="GO:0016324">
    <property type="term" value="C:apical plasma membrane"/>
    <property type="evidence" value="ECO:0007669"/>
    <property type="project" value="UniProtKB-SubCell"/>
</dbReference>
<dbReference type="GO" id="GO:0005783">
    <property type="term" value="C:endoplasmic reticulum"/>
    <property type="evidence" value="ECO:0000314"/>
    <property type="project" value="FlyBase"/>
</dbReference>
<dbReference type="GO" id="GO:0005789">
    <property type="term" value="C:endoplasmic reticulum membrane"/>
    <property type="evidence" value="ECO:0007669"/>
    <property type="project" value="UniProtKB-SubCell"/>
</dbReference>
<dbReference type="GO" id="GO:0005794">
    <property type="term" value="C:Golgi apparatus"/>
    <property type="evidence" value="ECO:0000318"/>
    <property type="project" value="GO_Central"/>
</dbReference>
<dbReference type="GO" id="GO:0019706">
    <property type="term" value="F:protein-cysteine S-palmitoyltransferase activity"/>
    <property type="evidence" value="ECO:0000250"/>
    <property type="project" value="FlyBase"/>
</dbReference>
<dbReference type="GO" id="GO:0048104">
    <property type="term" value="P:establishment of body hair or bristle planar orientation"/>
    <property type="evidence" value="ECO:0000315"/>
    <property type="project" value="FlyBase"/>
</dbReference>
<dbReference type="GO" id="GO:0001737">
    <property type="term" value="P:establishment of imaginal disc-derived wing hair orientation"/>
    <property type="evidence" value="ECO:0000315"/>
    <property type="project" value="FlyBase"/>
</dbReference>
<dbReference type="GO" id="GO:0007389">
    <property type="term" value="P:pattern specification process"/>
    <property type="evidence" value="ECO:0000315"/>
    <property type="project" value="FlyBase"/>
</dbReference>
<dbReference type="GO" id="GO:0006612">
    <property type="term" value="P:protein targeting to membrane"/>
    <property type="evidence" value="ECO:0000318"/>
    <property type="project" value="GO_Central"/>
</dbReference>
<dbReference type="InterPro" id="IPR001594">
    <property type="entry name" value="Palmitoyltrfase_DHHC"/>
</dbReference>
<dbReference type="InterPro" id="IPR039859">
    <property type="entry name" value="PFA4/ZDH16/20/ERF2-like"/>
</dbReference>
<dbReference type="PANTHER" id="PTHR22883:SF43">
    <property type="entry name" value="PALMITOYLTRANSFERASE APP"/>
    <property type="match status" value="1"/>
</dbReference>
<dbReference type="PANTHER" id="PTHR22883">
    <property type="entry name" value="ZINC FINGER DHHC DOMAIN CONTAINING PROTEIN"/>
    <property type="match status" value="1"/>
</dbReference>
<dbReference type="Pfam" id="PF01529">
    <property type="entry name" value="DHHC"/>
    <property type="match status" value="1"/>
</dbReference>
<dbReference type="PROSITE" id="PS50216">
    <property type="entry name" value="DHHC"/>
    <property type="match status" value="1"/>
</dbReference>
<evidence type="ECO:0000255" key="1"/>
<evidence type="ECO:0000255" key="2">
    <source>
        <dbReference type="PROSITE-ProRule" id="PRU00067"/>
    </source>
</evidence>
<evidence type="ECO:0000255" key="3">
    <source>
        <dbReference type="RuleBase" id="RU079119"/>
    </source>
</evidence>
<evidence type="ECO:0000256" key="4">
    <source>
        <dbReference type="SAM" id="MobiDB-lite"/>
    </source>
</evidence>
<evidence type="ECO:0000269" key="5">
    <source>
    </source>
</evidence>
<evidence type="ECO:0000269" key="6">
    <source>
    </source>
</evidence>
<evidence type="ECO:0000269" key="7">
    <source>
    </source>
</evidence>
<evidence type="ECO:0000303" key="8">
    <source>
    </source>
</evidence>
<evidence type="ECO:0000305" key="9"/>
<evidence type="ECO:0000312" key="10">
    <source>
        <dbReference type="EMBL" id="ABN49447.1"/>
    </source>
</evidence>
<evidence type="ECO:0000312" key="11">
    <source>
        <dbReference type="FlyBase" id="FBgn0260941"/>
    </source>
</evidence>
<evidence type="ECO:0000312" key="12">
    <source>
        <dbReference type="Proteomes" id="UP000000803"/>
    </source>
</evidence>
<accession>A2VEY9</accession>
<accession>B7Z0A6</accession>
<accession>M9NDQ1</accession>
<accession>M9NF95</accession>